<sequence length="145" mass="15863">MIALIQRALSASVVVEGNIVGEIGPGLLVLLGVEQGDTEQKAQRLCERVLGYRIFSDENDKMNLNVQQAGGSVLVVSQFTLVADTQKGMRPSFSRGAIPQEADRLYQYFVAQCRERGVKTETGLFAADMKVSLVNDGPVTFWLQV</sequence>
<dbReference type="EC" id="3.1.1.96" evidence="1"/>
<dbReference type="EMBL" id="CP000305">
    <property type="protein sequence ID" value="ABG16588.1"/>
    <property type="molecule type" value="Genomic_DNA"/>
</dbReference>
<dbReference type="EMBL" id="ACNQ01000006">
    <property type="protein sequence ID" value="EEO78034.1"/>
    <property type="molecule type" value="Genomic_DNA"/>
</dbReference>
<dbReference type="RefSeq" id="WP_002209009.1">
    <property type="nucleotide sequence ID" value="NZ_ACNQ01000006.1"/>
</dbReference>
<dbReference type="SMR" id="Q1CN42"/>
<dbReference type="GeneID" id="57974561"/>
<dbReference type="KEGG" id="ypn:YPN_0255"/>
<dbReference type="HOGENOM" id="CLU_076901_1_0_6"/>
<dbReference type="Proteomes" id="UP000008936">
    <property type="component" value="Chromosome"/>
</dbReference>
<dbReference type="GO" id="GO:0005737">
    <property type="term" value="C:cytoplasm"/>
    <property type="evidence" value="ECO:0007669"/>
    <property type="project" value="UniProtKB-SubCell"/>
</dbReference>
<dbReference type="GO" id="GO:0051500">
    <property type="term" value="F:D-tyrosyl-tRNA(Tyr) deacylase activity"/>
    <property type="evidence" value="ECO:0007669"/>
    <property type="project" value="TreeGrafter"/>
</dbReference>
<dbReference type="GO" id="GO:0106026">
    <property type="term" value="F:Gly-tRNA(Ala) deacylase activity"/>
    <property type="evidence" value="ECO:0007669"/>
    <property type="project" value="UniProtKB-UniRule"/>
</dbReference>
<dbReference type="GO" id="GO:0043908">
    <property type="term" value="F:Ser(Gly)-tRNA(Ala) hydrolase activity"/>
    <property type="evidence" value="ECO:0007669"/>
    <property type="project" value="UniProtKB-UniRule"/>
</dbReference>
<dbReference type="GO" id="GO:0000049">
    <property type="term" value="F:tRNA binding"/>
    <property type="evidence" value="ECO:0007669"/>
    <property type="project" value="UniProtKB-UniRule"/>
</dbReference>
<dbReference type="GO" id="GO:0019478">
    <property type="term" value="P:D-amino acid catabolic process"/>
    <property type="evidence" value="ECO:0007669"/>
    <property type="project" value="UniProtKB-UniRule"/>
</dbReference>
<dbReference type="CDD" id="cd00563">
    <property type="entry name" value="Dtyr_deacylase"/>
    <property type="match status" value="1"/>
</dbReference>
<dbReference type="FunFam" id="3.50.80.10:FF:000001">
    <property type="entry name" value="D-aminoacyl-tRNA deacylase"/>
    <property type="match status" value="1"/>
</dbReference>
<dbReference type="Gene3D" id="3.50.80.10">
    <property type="entry name" value="D-tyrosyl-tRNA(Tyr) deacylase"/>
    <property type="match status" value="1"/>
</dbReference>
<dbReference type="HAMAP" id="MF_00518">
    <property type="entry name" value="Deacylase_Dtd"/>
    <property type="match status" value="1"/>
</dbReference>
<dbReference type="InterPro" id="IPR003732">
    <property type="entry name" value="Daa-tRNA_deacyls_DTD"/>
</dbReference>
<dbReference type="InterPro" id="IPR023509">
    <property type="entry name" value="DTD-like_sf"/>
</dbReference>
<dbReference type="NCBIfam" id="TIGR00256">
    <property type="entry name" value="D-aminoacyl-tRNA deacylase"/>
    <property type="match status" value="1"/>
</dbReference>
<dbReference type="PANTHER" id="PTHR10472:SF5">
    <property type="entry name" value="D-AMINOACYL-TRNA DEACYLASE 1"/>
    <property type="match status" value="1"/>
</dbReference>
<dbReference type="PANTHER" id="PTHR10472">
    <property type="entry name" value="D-TYROSYL-TRNA TYR DEACYLASE"/>
    <property type="match status" value="1"/>
</dbReference>
<dbReference type="Pfam" id="PF02580">
    <property type="entry name" value="Tyr_Deacylase"/>
    <property type="match status" value="1"/>
</dbReference>
<dbReference type="SUPFAM" id="SSF69500">
    <property type="entry name" value="DTD-like"/>
    <property type="match status" value="1"/>
</dbReference>
<evidence type="ECO:0000255" key="1">
    <source>
        <dbReference type="HAMAP-Rule" id="MF_00518"/>
    </source>
</evidence>
<gene>
    <name evidence="1" type="primary">dtd</name>
    <name type="ordered locus">YPN_0255</name>
    <name type="ORF">YP516_0246</name>
</gene>
<keyword id="KW-0963">Cytoplasm</keyword>
<keyword id="KW-0378">Hydrolase</keyword>
<keyword id="KW-0694">RNA-binding</keyword>
<keyword id="KW-0820">tRNA-binding</keyword>
<feature type="chain" id="PRO_0000259332" description="D-aminoacyl-tRNA deacylase">
    <location>
        <begin position="1"/>
        <end position="145"/>
    </location>
</feature>
<feature type="short sequence motif" description="Gly-cisPro motif, important for rejection of L-amino acids" evidence="1">
    <location>
        <begin position="137"/>
        <end position="138"/>
    </location>
</feature>
<reference key="1">
    <citation type="journal article" date="2006" name="J. Bacteriol.">
        <title>Complete genome sequence of Yersinia pestis strains Antiqua and Nepal516: evidence of gene reduction in an emerging pathogen.</title>
        <authorList>
            <person name="Chain P.S.G."/>
            <person name="Hu P."/>
            <person name="Malfatti S.A."/>
            <person name="Radnedge L."/>
            <person name="Larimer F."/>
            <person name="Vergez L.M."/>
            <person name="Worsham P."/>
            <person name="Chu M.C."/>
            <person name="Andersen G.L."/>
        </authorList>
    </citation>
    <scope>NUCLEOTIDE SEQUENCE [LARGE SCALE GENOMIC DNA]</scope>
    <source>
        <strain>Nepal516</strain>
    </source>
</reference>
<reference key="2">
    <citation type="submission" date="2009-04" db="EMBL/GenBank/DDBJ databases">
        <title>Yersinia pestis Nepal516A whole genome shotgun sequencing project.</title>
        <authorList>
            <person name="Plunkett G. III"/>
            <person name="Anderson B.D."/>
            <person name="Baumler D.J."/>
            <person name="Burland V."/>
            <person name="Cabot E.L."/>
            <person name="Glasner J.D."/>
            <person name="Mau B."/>
            <person name="Neeno-Eckwall E."/>
            <person name="Perna N.T."/>
            <person name="Munk A.C."/>
            <person name="Tapia R."/>
            <person name="Green L.D."/>
            <person name="Rogers Y.C."/>
            <person name="Detter J.C."/>
            <person name="Bruce D.C."/>
            <person name="Brettin T.S."/>
        </authorList>
    </citation>
    <scope>NUCLEOTIDE SEQUENCE [LARGE SCALE GENOMIC DNA]</scope>
    <source>
        <strain>Nepal516</strain>
    </source>
</reference>
<accession>Q1CN42</accession>
<accession>C4GPN4</accession>
<comment type="function">
    <text evidence="1">An aminoacyl-tRNA editing enzyme that deacylates mischarged D-aminoacyl-tRNAs. Also deacylates mischarged glycyl-tRNA(Ala), protecting cells against glycine mischarging by AlaRS. Acts via tRNA-based rather than protein-based catalysis; rejects L-amino acids rather than detecting D-amino acids in the active site. By recycling D-aminoacyl-tRNA to D-amino acids and free tRNA molecules, this enzyme counteracts the toxicity associated with the formation of D-aminoacyl-tRNA entities in vivo and helps enforce protein L-homochirality.</text>
</comment>
<comment type="catalytic activity">
    <reaction evidence="1">
        <text>glycyl-tRNA(Ala) + H2O = tRNA(Ala) + glycine + H(+)</text>
        <dbReference type="Rhea" id="RHEA:53744"/>
        <dbReference type="Rhea" id="RHEA-COMP:9657"/>
        <dbReference type="Rhea" id="RHEA-COMP:13640"/>
        <dbReference type="ChEBI" id="CHEBI:15377"/>
        <dbReference type="ChEBI" id="CHEBI:15378"/>
        <dbReference type="ChEBI" id="CHEBI:57305"/>
        <dbReference type="ChEBI" id="CHEBI:78442"/>
        <dbReference type="ChEBI" id="CHEBI:78522"/>
        <dbReference type="EC" id="3.1.1.96"/>
    </reaction>
</comment>
<comment type="catalytic activity">
    <reaction evidence="1">
        <text>a D-aminoacyl-tRNA + H2O = a tRNA + a D-alpha-amino acid + H(+)</text>
        <dbReference type="Rhea" id="RHEA:13953"/>
        <dbReference type="Rhea" id="RHEA-COMP:10123"/>
        <dbReference type="Rhea" id="RHEA-COMP:10124"/>
        <dbReference type="ChEBI" id="CHEBI:15377"/>
        <dbReference type="ChEBI" id="CHEBI:15378"/>
        <dbReference type="ChEBI" id="CHEBI:59871"/>
        <dbReference type="ChEBI" id="CHEBI:78442"/>
        <dbReference type="ChEBI" id="CHEBI:79333"/>
        <dbReference type="EC" id="3.1.1.96"/>
    </reaction>
</comment>
<comment type="subunit">
    <text evidence="1">Homodimer.</text>
</comment>
<comment type="subcellular location">
    <subcellularLocation>
        <location evidence="1">Cytoplasm</location>
    </subcellularLocation>
</comment>
<comment type="domain">
    <text evidence="1">A Gly-cisPro motif from one monomer fits into the active site of the other monomer to allow specific chiral rejection of L-amino acids.</text>
</comment>
<comment type="similarity">
    <text evidence="1">Belongs to the DTD family.</text>
</comment>
<name>DTD_YERPN</name>
<proteinExistence type="inferred from homology"/>
<protein>
    <recommendedName>
        <fullName evidence="1">D-aminoacyl-tRNA deacylase</fullName>
        <shortName evidence="1">DTD</shortName>
        <ecNumber evidence="1">3.1.1.96</ecNumber>
    </recommendedName>
    <alternativeName>
        <fullName evidence="1">Gly-tRNA(Ala) deacylase</fullName>
    </alternativeName>
</protein>
<organism>
    <name type="scientific">Yersinia pestis bv. Antiqua (strain Nepal516)</name>
    <dbReference type="NCBI Taxonomy" id="377628"/>
    <lineage>
        <taxon>Bacteria</taxon>
        <taxon>Pseudomonadati</taxon>
        <taxon>Pseudomonadota</taxon>
        <taxon>Gammaproteobacteria</taxon>
        <taxon>Enterobacterales</taxon>
        <taxon>Yersiniaceae</taxon>
        <taxon>Yersinia</taxon>
    </lineage>
</organism>